<protein>
    <recommendedName>
        <fullName>UTP--glucose-1-phosphate uridylyltransferase</fullName>
        <ecNumber>2.7.7.9</ecNumber>
    </recommendedName>
    <alternativeName>
        <fullName>Alpha-D-glucosyl-1-phosphate uridylyltransferase</fullName>
    </alternativeName>
    <alternativeName>
        <fullName>UDP-glucose pyrophosphorylase</fullName>
        <shortName>UDPGP</shortName>
    </alternativeName>
    <alternativeName>
        <fullName>Uridine diphosphoglucose pyrophosphorylase</fullName>
    </alternativeName>
</protein>
<evidence type="ECO:0000250" key="1"/>
<evidence type="ECO:0000305" key="2"/>
<sequence>MKKIKKAIIPAAGLGTRFLPATKAMPKEMLPILDKPTIQYIVEEAARAGIEDIIIVTGRHKRAIEDHFDSQKELEMVLKEKGKSELLEKVQYSTELANIFYVRQKEQKGLGHAISSARQFIGNEPFAVLLGDDIVESEVPAVKQLIDVYEETGHSVIGVQEVPEADTHRYGIIDPLTKNGRQYEVKKFVEKPAQGTAPSNLAIMGRYVLTPEIFDYLKTQKEGAGNEIQLTDAIERMNNDNQVYAYDFEGERYDVGEKLGFVKTTIEYALKDDSMREELTRFIKALGL</sequence>
<comment type="function">
    <text evidence="1">Catalyzes the formation of UDP-glucose from glucose-1-phosphate and UTP. This is an intermediate step in the biosynthesis of diglucosyl-diacylglycerol (Glc2-DAG), i.e. the predominant glycolipid found in the S.aureus membrane, which is also used as a membrane anchor for lipoteichoic acid (LTA) (By similarity).</text>
</comment>
<comment type="catalytic activity">
    <reaction>
        <text>alpha-D-glucose 1-phosphate + UTP + H(+) = UDP-alpha-D-glucose + diphosphate</text>
        <dbReference type="Rhea" id="RHEA:19889"/>
        <dbReference type="ChEBI" id="CHEBI:15378"/>
        <dbReference type="ChEBI" id="CHEBI:33019"/>
        <dbReference type="ChEBI" id="CHEBI:46398"/>
        <dbReference type="ChEBI" id="CHEBI:58601"/>
        <dbReference type="ChEBI" id="CHEBI:58885"/>
        <dbReference type="EC" id="2.7.7.9"/>
    </reaction>
</comment>
<comment type="pathway">
    <text>Glycolipid metabolism; diglucosyl-diacylglycerol biosynthesis.</text>
</comment>
<comment type="similarity">
    <text evidence="2">Belongs to the UDPGP type 2 family.</text>
</comment>
<comment type="sequence caution" evidence="2">
    <conflict type="erroneous initiation">
        <sequence resource="EMBL-CDS" id="ABD22300"/>
    </conflict>
</comment>
<name>GTAB_STAA3</name>
<gene>
    <name type="primary">gtaB</name>
    <name type="synonym">galU</name>
    <name type="ordered locus">SAUSA300_2439</name>
</gene>
<dbReference type="EC" id="2.7.7.9"/>
<dbReference type="EMBL" id="CP000255">
    <property type="protein sequence ID" value="ABD22300.1"/>
    <property type="status" value="ALT_INIT"/>
    <property type="molecule type" value="Genomic_DNA"/>
</dbReference>
<dbReference type="RefSeq" id="WP_000721336.1">
    <property type="nucleotide sequence ID" value="NZ_CP027476.1"/>
</dbReference>
<dbReference type="SMR" id="Q2FE05"/>
<dbReference type="KEGG" id="saa:SAUSA300_2439"/>
<dbReference type="HOGENOM" id="CLU_029499_1_3_9"/>
<dbReference type="OMA" id="MHYVRQG"/>
<dbReference type="UniPathway" id="UPA00894"/>
<dbReference type="Proteomes" id="UP000001939">
    <property type="component" value="Chromosome"/>
</dbReference>
<dbReference type="GO" id="GO:0003983">
    <property type="term" value="F:UTP:glucose-1-phosphate uridylyltransferase activity"/>
    <property type="evidence" value="ECO:0007669"/>
    <property type="project" value="UniProtKB-EC"/>
</dbReference>
<dbReference type="GO" id="GO:0009246">
    <property type="term" value="P:enterobacterial common antigen biosynthetic process"/>
    <property type="evidence" value="ECO:0007669"/>
    <property type="project" value="UniProtKB-UniPathway"/>
</dbReference>
<dbReference type="GO" id="GO:0006011">
    <property type="term" value="P:UDP-alpha-D-glucose metabolic process"/>
    <property type="evidence" value="ECO:0007669"/>
    <property type="project" value="InterPro"/>
</dbReference>
<dbReference type="CDD" id="cd02541">
    <property type="entry name" value="UGPase_prokaryotic"/>
    <property type="match status" value="1"/>
</dbReference>
<dbReference type="Gene3D" id="3.90.550.10">
    <property type="entry name" value="Spore Coat Polysaccharide Biosynthesis Protein SpsA, Chain A"/>
    <property type="match status" value="1"/>
</dbReference>
<dbReference type="InterPro" id="IPR005771">
    <property type="entry name" value="GalU_uridylyltTrfase_bac/arc"/>
</dbReference>
<dbReference type="InterPro" id="IPR005835">
    <property type="entry name" value="NTP_transferase_dom"/>
</dbReference>
<dbReference type="InterPro" id="IPR029044">
    <property type="entry name" value="Nucleotide-diphossugar_trans"/>
</dbReference>
<dbReference type="NCBIfam" id="TIGR01099">
    <property type="entry name" value="galU"/>
    <property type="match status" value="1"/>
</dbReference>
<dbReference type="PANTHER" id="PTHR43197">
    <property type="entry name" value="UTP--GLUCOSE-1-PHOSPHATE URIDYLYLTRANSFERASE"/>
    <property type="match status" value="1"/>
</dbReference>
<dbReference type="PANTHER" id="PTHR43197:SF1">
    <property type="entry name" value="UTP--GLUCOSE-1-PHOSPHATE URIDYLYLTRANSFERASE"/>
    <property type="match status" value="1"/>
</dbReference>
<dbReference type="Pfam" id="PF00483">
    <property type="entry name" value="NTP_transferase"/>
    <property type="match status" value="1"/>
</dbReference>
<dbReference type="SUPFAM" id="SSF53448">
    <property type="entry name" value="Nucleotide-diphospho-sugar transferases"/>
    <property type="match status" value="1"/>
</dbReference>
<keyword id="KW-0119">Carbohydrate metabolism</keyword>
<keyword id="KW-0548">Nucleotidyltransferase</keyword>
<keyword id="KW-0808">Transferase</keyword>
<feature type="chain" id="PRO_0000308302" description="UTP--glucose-1-phosphate uridylyltransferase">
    <location>
        <begin position="1"/>
        <end position="288"/>
    </location>
</feature>
<proteinExistence type="inferred from homology"/>
<accession>Q2FE05</accession>
<reference key="1">
    <citation type="journal article" date="2006" name="Lancet">
        <title>Complete genome sequence of USA300, an epidemic clone of community-acquired meticillin-resistant Staphylococcus aureus.</title>
        <authorList>
            <person name="Diep B.A."/>
            <person name="Gill S.R."/>
            <person name="Chang R.F."/>
            <person name="Phan T.H."/>
            <person name="Chen J.H."/>
            <person name="Davidson M.G."/>
            <person name="Lin F."/>
            <person name="Lin J."/>
            <person name="Carleton H.A."/>
            <person name="Mongodin E.F."/>
            <person name="Sensabaugh G.F."/>
            <person name="Perdreau-Remington F."/>
        </authorList>
    </citation>
    <scope>NUCLEOTIDE SEQUENCE [LARGE SCALE GENOMIC DNA]</scope>
    <source>
        <strain>USA300</strain>
    </source>
</reference>
<organism>
    <name type="scientific">Staphylococcus aureus (strain USA300)</name>
    <dbReference type="NCBI Taxonomy" id="367830"/>
    <lineage>
        <taxon>Bacteria</taxon>
        <taxon>Bacillati</taxon>
        <taxon>Bacillota</taxon>
        <taxon>Bacilli</taxon>
        <taxon>Bacillales</taxon>
        <taxon>Staphylococcaceae</taxon>
        <taxon>Staphylococcus</taxon>
    </lineage>
</organism>